<sequence>MGGLQPWHWLIVIAVFVLLFGAKKLPDAARSLGKSMRIFKSEIKEMQSDSNAAKSDQPEQITSERVVVDPSTQSTSSNSDKRPA</sequence>
<name>TATA_MYCGI</name>
<accession>A4TB40</accession>
<protein>
    <recommendedName>
        <fullName evidence="1">Sec-independent protein translocase protein TatA</fullName>
    </recommendedName>
</protein>
<gene>
    <name evidence="1" type="primary">tatA</name>
    <name type="ordered locus">Mflv_3093</name>
</gene>
<dbReference type="EMBL" id="CP000656">
    <property type="protein sequence ID" value="ABP45570.1"/>
    <property type="molecule type" value="Genomic_DNA"/>
</dbReference>
<dbReference type="SMR" id="A4TB40"/>
<dbReference type="STRING" id="350054.Mflv_3093"/>
<dbReference type="KEGG" id="mgi:Mflv_3093"/>
<dbReference type="eggNOG" id="COG1826">
    <property type="taxonomic scope" value="Bacteria"/>
</dbReference>
<dbReference type="HOGENOM" id="CLU_086034_4_2_11"/>
<dbReference type="OrthoDB" id="5245163at2"/>
<dbReference type="GO" id="GO:0033281">
    <property type="term" value="C:TAT protein transport complex"/>
    <property type="evidence" value="ECO:0007669"/>
    <property type="project" value="UniProtKB-UniRule"/>
</dbReference>
<dbReference type="GO" id="GO:0008320">
    <property type="term" value="F:protein transmembrane transporter activity"/>
    <property type="evidence" value="ECO:0007669"/>
    <property type="project" value="UniProtKB-UniRule"/>
</dbReference>
<dbReference type="GO" id="GO:0043953">
    <property type="term" value="P:protein transport by the Tat complex"/>
    <property type="evidence" value="ECO:0007669"/>
    <property type="project" value="UniProtKB-UniRule"/>
</dbReference>
<dbReference type="Gene3D" id="1.20.5.3310">
    <property type="match status" value="1"/>
</dbReference>
<dbReference type="HAMAP" id="MF_00236">
    <property type="entry name" value="TatA_E"/>
    <property type="match status" value="1"/>
</dbReference>
<dbReference type="InterPro" id="IPR003369">
    <property type="entry name" value="TatA/B/E"/>
</dbReference>
<dbReference type="InterPro" id="IPR006312">
    <property type="entry name" value="TatA/E"/>
</dbReference>
<dbReference type="NCBIfam" id="NF001854">
    <property type="entry name" value="PRK00575.1"/>
    <property type="match status" value="1"/>
</dbReference>
<dbReference type="NCBIfam" id="TIGR01411">
    <property type="entry name" value="tatAE"/>
    <property type="match status" value="1"/>
</dbReference>
<dbReference type="PANTHER" id="PTHR42982">
    <property type="entry name" value="SEC-INDEPENDENT PROTEIN TRANSLOCASE PROTEIN TATA"/>
    <property type="match status" value="1"/>
</dbReference>
<dbReference type="PANTHER" id="PTHR42982:SF8">
    <property type="entry name" value="SEC-INDEPENDENT PROTEIN TRANSLOCASE PROTEIN TATA"/>
    <property type="match status" value="1"/>
</dbReference>
<dbReference type="Pfam" id="PF02416">
    <property type="entry name" value="TatA_B_E"/>
    <property type="match status" value="1"/>
</dbReference>
<reference key="1">
    <citation type="submission" date="2007-04" db="EMBL/GenBank/DDBJ databases">
        <title>Complete sequence of chromosome of Mycobacterium gilvum PYR-GCK.</title>
        <authorList>
            <consortium name="US DOE Joint Genome Institute"/>
            <person name="Copeland A."/>
            <person name="Lucas S."/>
            <person name="Lapidus A."/>
            <person name="Barry K."/>
            <person name="Detter J.C."/>
            <person name="Glavina del Rio T."/>
            <person name="Hammon N."/>
            <person name="Israni S."/>
            <person name="Dalin E."/>
            <person name="Tice H."/>
            <person name="Pitluck S."/>
            <person name="Chain P."/>
            <person name="Malfatti S."/>
            <person name="Shin M."/>
            <person name="Vergez L."/>
            <person name="Schmutz J."/>
            <person name="Larimer F."/>
            <person name="Land M."/>
            <person name="Hauser L."/>
            <person name="Kyrpides N."/>
            <person name="Mikhailova N."/>
            <person name="Miller C."/>
            <person name="Richardson P."/>
        </authorList>
    </citation>
    <scope>NUCLEOTIDE SEQUENCE [LARGE SCALE GENOMIC DNA]</scope>
    <source>
        <strain>PYR-GCK</strain>
    </source>
</reference>
<organism>
    <name type="scientific">Mycolicibacterium gilvum (strain PYR-GCK)</name>
    <name type="common">Mycobacterium gilvum (strain PYR-GCK)</name>
    <dbReference type="NCBI Taxonomy" id="350054"/>
    <lineage>
        <taxon>Bacteria</taxon>
        <taxon>Bacillati</taxon>
        <taxon>Actinomycetota</taxon>
        <taxon>Actinomycetes</taxon>
        <taxon>Mycobacteriales</taxon>
        <taxon>Mycobacteriaceae</taxon>
        <taxon>Mycolicibacterium</taxon>
    </lineage>
</organism>
<feature type="chain" id="PRO_1000078309" description="Sec-independent protein translocase protein TatA">
    <location>
        <begin position="1"/>
        <end position="84"/>
    </location>
</feature>
<feature type="transmembrane region" description="Helical" evidence="1">
    <location>
        <begin position="1"/>
        <end position="21"/>
    </location>
</feature>
<feature type="region of interest" description="Disordered" evidence="2">
    <location>
        <begin position="46"/>
        <end position="84"/>
    </location>
</feature>
<feature type="compositionally biased region" description="Polar residues" evidence="2">
    <location>
        <begin position="48"/>
        <end position="63"/>
    </location>
</feature>
<comment type="function">
    <text evidence="1">Part of the twin-arginine translocation (Tat) system that transports large folded proteins containing a characteristic twin-arginine motif in their signal peptide across membranes. TatA could form the protein-conducting channel of the Tat system.</text>
</comment>
<comment type="subunit">
    <text evidence="1">The Tat system comprises two distinct complexes: a TatABC complex, containing multiple copies of TatA, TatB and TatC subunits, and a separate TatA complex, containing only TatA subunits. Substrates initially bind to the TatABC complex, which probably triggers association of the separate TatA complex to form the active translocon.</text>
</comment>
<comment type="subcellular location">
    <subcellularLocation>
        <location evidence="1">Cell membrane</location>
        <topology evidence="1">Single-pass membrane protein</topology>
    </subcellularLocation>
</comment>
<comment type="similarity">
    <text evidence="1">Belongs to the TatA/E family.</text>
</comment>
<keyword id="KW-1003">Cell membrane</keyword>
<keyword id="KW-0472">Membrane</keyword>
<keyword id="KW-0653">Protein transport</keyword>
<keyword id="KW-0811">Translocation</keyword>
<keyword id="KW-0812">Transmembrane</keyword>
<keyword id="KW-1133">Transmembrane helix</keyword>
<keyword id="KW-0813">Transport</keyword>
<evidence type="ECO:0000255" key="1">
    <source>
        <dbReference type="HAMAP-Rule" id="MF_00236"/>
    </source>
</evidence>
<evidence type="ECO:0000256" key="2">
    <source>
        <dbReference type="SAM" id="MobiDB-lite"/>
    </source>
</evidence>
<proteinExistence type="inferred from homology"/>